<reference key="1">
    <citation type="journal article" date="1991" name="J. Mol. Evol.">
        <title>The complete nucleotide sequence of the mitochondrial DNA of the fin whale, Balaenoptera physalus.</title>
        <authorList>
            <person name="Arnason U."/>
            <person name="Gullberg A."/>
            <person name="Widegren B."/>
        </authorList>
    </citation>
    <scope>NUCLEOTIDE SEQUENCE [GENOMIC DNA]</scope>
    <source>
        <strain>Isolate No. 27 / Anno 1987</strain>
        <tissue>Liver</tissue>
    </source>
</reference>
<accession>P24980</accession>
<geneLocation type="mitochondrion"/>
<keyword id="KW-0249">Electron transport</keyword>
<keyword id="KW-0472">Membrane</keyword>
<keyword id="KW-0496">Mitochondrion</keyword>
<keyword id="KW-0999">Mitochondrion inner membrane</keyword>
<keyword id="KW-0520">NAD</keyword>
<keyword id="KW-0679">Respiratory chain</keyword>
<keyword id="KW-1278">Translocase</keyword>
<keyword id="KW-0812">Transmembrane</keyword>
<keyword id="KW-1133">Transmembrane helix</keyword>
<keyword id="KW-0813">Transport</keyword>
<keyword id="KW-0830">Ubiquinone</keyword>
<sequence>MMMYIVFILSIIFVISFVGVSSKPSPIYGGLGLIVGGGVGCGVILSFGGSFLGLMVFLIYLGGMLVVFGYTTAMATEQYPEVWVSNKVVLGAFVLGLVVEFLIVIYALKSGEVKIMFEFDGLGDWVVYDTGGSGVFSEEATGIAALYSYGVWLVIVTGWSLFISVVIIMEITRGS</sequence>
<name>NU6M_BALPH</name>
<comment type="function">
    <text evidence="1">Core subunit of the mitochondrial membrane respiratory chain NADH dehydrogenase (Complex I) which catalyzes electron transfer from NADH through the respiratory chain, using ubiquinone as an electron acceptor. Essential for the catalytic activity and assembly of complex I.</text>
</comment>
<comment type="catalytic activity">
    <reaction evidence="1">
        <text>a ubiquinone + NADH + 5 H(+)(in) = a ubiquinol + NAD(+) + 4 H(+)(out)</text>
        <dbReference type="Rhea" id="RHEA:29091"/>
        <dbReference type="Rhea" id="RHEA-COMP:9565"/>
        <dbReference type="Rhea" id="RHEA-COMP:9566"/>
        <dbReference type="ChEBI" id="CHEBI:15378"/>
        <dbReference type="ChEBI" id="CHEBI:16389"/>
        <dbReference type="ChEBI" id="CHEBI:17976"/>
        <dbReference type="ChEBI" id="CHEBI:57540"/>
        <dbReference type="ChEBI" id="CHEBI:57945"/>
        <dbReference type="EC" id="7.1.1.2"/>
    </reaction>
</comment>
<comment type="subunit">
    <text evidence="2">Core subunit of respiratory chain NADH dehydrogenase (Complex I) which is composed of 45 different subunits.</text>
</comment>
<comment type="subcellular location">
    <subcellularLocation>
        <location evidence="2">Mitochondrion inner membrane</location>
        <topology evidence="3">Multi-pass membrane protein</topology>
    </subcellularLocation>
</comment>
<comment type="similarity">
    <text evidence="4">Belongs to the complex I subunit 6 family.</text>
</comment>
<feature type="chain" id="PRO_0000118247" description="NADH-ubiquinone oxidoreductase chain 6">
    <location>
        <begin position="1"/>
        <end position="175"/>
    </location>
</feature>
<feature type="transmembrane region" description="Helical" evidence="3">
    <location>
        <begin position="1"/>
        <end position="21"/>
    </location>
</feature>
<feature type="transmembrane region" description="Helical" evidence="3">
    <location>
        <begin position="25"/>
        <end position="45"/>
    </location>
</feature>
<feature type="transmembrane region" description="Helical" evidence="3">
    <location>
        <begin position="47"/>
        <end position="67"/>
    </location>
</feature>
<feature type="transmembrane region" description="Helical" evidence="3">
    <location>
        <begin position="88"/>
        <end position="108"/>
    </location>
</feature>
<feature type="transmembrane region" description="Helical" evidence="3">
    <location>
        <begin position="149"/>
        <end position="169"/>
    </location>
</feature>
<gene>
    <name type="primary">MT-ND6</name>
    <name type="synonym">MTND6</name>
    <name type="synonym">NADH6</name>
    <name type="synonym">ND6</name>
</gene>
<dbReference type="EC" id="7.1.1.2" evidence="1"/>
<dbReference type="EMBL" id="X61145">
    <property type="protein sequence ID" value="CAA43450.1"/>
    <property type="molecule type" value="Genomic_DNA"/>
</dbReference>
<dbReference type="PIR" id="D58851">
    <property type="entry name" value="D58851"/>
</dbReference>
<dbReference type="RefSeq" id="NP_006900.1">
    <property type="nucleotide sequence ID" value="NC_001321.1"/>
</dbReference>
<dbReference type="SMR" id="P24980"/>
<dbReference type="GeneID" id="807614"/>
<dbReference type="CTD" id="4541"/>
<dbReference type="GO" id="GO:0005743">
    <property type="term" value="C:mitochondrial inner membrane"/>
    <property type="evidence" value="ECO:0000250"/>
    <property type="project" value="UniProtKB"/>
</dbReference>
<dbReference type="GO" id="GO:0008137">
    <property type="term" value="F:NADH dehydrogenase (ubiquinone) activity"/>
    <property type="evidence" value="ECO:0000250"/>
    <property type="project" value="UniProtKB"/>
</dbReference>
<dbReference type="GO" id="GO:0006120">
    <property type="term" value="P:mitochondrial electron transport, NADH to ubiquinone"/>
    <property type="evidence" value="ECO:0000250"/>
    <property type="project" value="UniProtKB"/>
</dbReference>
<dbReference type="GO" id="GO:0032981">
    <property type="term" value="P:mitochondrial respiratory chain complex I assembly"/>
    <property type="evidence" value="ECO:0000250"/>
    <property type="project" value="UniProtKB"/>
</dbReference>
<dbReference type="Gene3D" id="1.20.120.1200">
    <property type="entry name" value="NADH-ubiquinone/plastoquinone oxidoreductase chain 6, subunit NuoJ"/>
    <property type="match status" value="1"/>
</dbReference>
<dbReference type="InterPro" id="IPR050269">
    <property type="entry name" value="ComplexI_Subunit6"/>
</dbReference>
<dbReference type="InterPro" id="IPR001457">
    <property type="entry name" value="NADH_UbQ/plastoQ_OxRdtase_su6"/>
</dbReference>
<dbReference type="InterPro" id="IPR042106">
    <property type="entry name" value="Nuo/plastoQ_OxRdtase_6_NuoJ"/>
</dbReference>
<dbReference type="PANTHER" id="PTHR11435">
    <property type="entry name" value="NADH UBIQUINONE OXIDOREDUCTASE SUBUNIT ND6"/>
    <property type="match status" value="1"/>
</dbReference>
<dbReference type="PANTHER" id="PTHR11435:SF1">
    <property type="entry name" value="NADH-UBIQUINONE OXIDOREDUCTASE CHAIN 6"/>
    <property type="match status" value="1"/>
</dbReference>
<dbReference type="Pfam" id="PF00499">
    <property type="entry name" value="Oxidored_q3"/>
    <property type="match status" value="1"/>
</dbReference>
<evidence type="ECO:0000250" key="1">
    <source>
        <dbReference type="UniProtKB" id="P03923"/>
    </source>
</evidence>
<evidence type="ECO:0000250" key="2">
    <source>
        <dbReference type="UniProtKB" id="P03924"/>
    </source>
</evidence>
<evidence type="ECO:0000255" key="3"/>
<evidence type="ECO:0000305" key="4"/>
<protein>
    <recommendedName>
        <fullName>NADH-ubiquinone oxidoreductase chain 6</fullName>
        <ecNumber evidence="1">7.1.1.2</ecNumber>
    </recommendedName>
    <alternativeName>
        <fullName>NADH dehydrogenase subunit 6</fullName>
    </alternativeName>
</protein>
<organism>
    <name type="scientific">Balaenoptera physalus</name>
    <name type="common">Fin whale</name>
    <name type="synonym">Balaena physalus</name>
    <dbReference type="NCBI Taxonomy" id="9770"/>
    <lineage>
        <taxon>Eukaryota</taxon>
        <taxon>Metazoa</taxon>
        <taxon>Chordata</taxon>
        <taxon>Craniata</taxon>
        <taxon>Vertebrata</taxon>
        <taxon>Euteleostomi</taxon>
        <taxon>Mammalia</taxon>
        <taxon>Eutheria</taxon>
        <taxon>Laurasiatheria</taxon>
        <taxon>Artiodactyla</taxon>
        <taxon>Whippomorpha</taxon>
        <taxon>Cetacea</taxon>
        <taxon>Mysticeti</taxon>
        <taxon>Balaenopteridae</taxon>
        <taxon>Balaenoptera</taxon>
    </lineage>
</organism>
<proteinExistence type="inferred from homology"/>